<feature type="chain" id="PRO_1000057984" description="Phosphoglycerate kinase">
    <location>
        <begin position="1"/>
        <end position="387"/>
    </location>
</feature>
<feature type="binding site" evidence="1">
    <location>
        <begin position="21"/>
        <end position="23"/>
    </location>
    <ligand>
        <name>substrate</name>
    </ligand>
</feature>
<feature type="binding site" evidence="1">
    <location>
        <position position="36"/>
    </location>
    <ligand>
        <name>substrate</name>
    </ligand>
</feature>
<feature type="binding site" evidence="1">
    <location>
        <begin position="59"/>
        <end position="62"/>
    </location>
    <ligand>
        <name>substrate</name>
    </ligand>
</feature>
<feature type="binding site" evidence="1">
    <location>
        <position position="113"/>
    </location>
    <ligand>
        <name>substrate</name>
    </ligand>
</feature>
<feature type="binding site" evidence="1">
    <location>
        <position position="146"/>
    </location>
    <ligand>
        <name>substrate</name>
    </ligand>
</feature>
<feature type="binding site" evidence="1">
    <location>
        <position position="197"/>
    </location>
    <ligand>
        <name>ATP</name>
        <dbReference type="ChEBI" id="CHEBI:30616"/>
    </ligand>
</feature>
<feature type="binding site" evidence="1">
    <location>
        <position position="314"/>
    </location>
    <ligand>
        <name>ATP</name>
        <dbReference type="ChEBI" id="CHEBI:30616"/>
    </ligand>
</feature>
<feature type="binding site" evidence="1">
    <location>
        <begin position="340"/>
        <end position="343"/>
    </location>
    <ligand>
        <name>ATP</name>
        <dbReference type="ChEBI" id="CHEBI:30616"/>
    </ligand>
</feature>
<feature type="modified residue" description="N6-acetyllysine" evidence="1">
    <location>
        <position position="84"/>
    </location>
</feature>
<protein>
    <recommendedName>
        <fullName evidence="1">Phosphoglycerate kinase</fullName>
        <ecNumber evidence="1">2.7.2.3</ecNumber>
    </recommendedName>
</protein>
<dbReference type="EC" id="2.7.2.3" evidence="1"/>
<dbReference type="EMBL" id="CP000468">
    <property type="protein sequence ID" value="ABJ02350.1"/>
    <property type="molecule type" value="Genomic_DNA"/>
</dbReference>
<dbReference type="RefSeq" id="WP_000111269.1">
    <property type="nucleotide sequence ID" value="NZ_CADILS010000010.1"/>
</dbReference>
<dbReference type="SMR" id="A1AFB0"/>
<dbReference type="GeneID" id="89517738"/>
<dbReference type="KEGG" id="ecv:APECO1_3607"/>
<dbReference type="HOGENOM" id="CLU_025427_0_2_6"/>
<dbReference type="UniPathway" id="UPA00109">
    <property type="reaction ID" value="UER00185"/>
</dbReference>
<dbReference type="Proteomes" id="UP000008216">
    <property type="component" value="Chromosome"/>
</dbReference>
<dbReference type="GO" id="GO:0005829">
    <property type="term" value="C:cytosol"/>
    <property type="evidence" value="ECO:0007669"/>
    <property type="project" value="TreeGrafter"/>
</dbReference>
<dbReference type="GO" id="GO:0043531">
    <property type="term" value="F:ADP binding"/>
    <property type="evidence" value="ECO:0007669"/>
    <property type="project" value="TreeGrafter"/>
</dbReference>
<dbReference type="GO" id="GO:0005524">
    <property type="term" value="F:ATP binding"/>
    <property type="evidence" value="ECO:0007669"/>
    <property type="project" value="UniProtKB-KW"/>
</dbReference>
<dbReference type="GO" id="GO:0004618">
    <property type="term" value="F:phosphoglycerate kinase activity"/>
    <property type="evidence" value="ECO:0007669"/>
    <property type="project" value="UniProtKB-UniRule"/>
</dbReference>
<dbReference type="GO" id="GO:0006094">
    <property type="term" value="P:gluconeogenesis"/>
    <property type="evidence" value="ECO:0007669"/>
    <property type="project" value="TreeGrafter"/>
</dbReference>
<dbReference type="GO" id="GO:0006096">
    <property type="term" value="P:glycolytic process"/>
    <property type="evidence" value="ECO:0007669"/>
    <property type="project" value="UniProtKB-UniRule"/>
</dbReference>
<dbReference type="CDD" id="cd00318">
    <property type="entry name" value="Phosphoglycerate_kinase"/>
    <property type="match status" value="1"/>
</dbReference>
<dbReference type="FunFam" id="3.40.50.1260:FF:000001">
    <property type="entry name" value="Phosphoglycerate kinase"/>
    <property type="match status" value="1"/>
</dbReference>
<dbReference type="FunFam" id="3.40.50.1260:FF:000002">
    <property type="entry name" value="Phosphoglycerate kinase"/>
    <property type="match status" value="1"/>
</dbReference>
<dbReference type="Gene3D" id="3.40.50.1260">
    <property type="entry name" value="Phosphoglycerate kinase, N-terminal domain"/>
    <property type="match status" value="2"/>
</dbReference>
<dbReference type="HAMAP" id="MF_00145">
    <property type="entry name" value="Phosphoglyc_kinase"/>
    <property type="match status" value="1"/>
</dbReference>
<dbReference type="InterPro" id="IPR001576">
    <property type="entry name" value="Phosphoglycerate_kinase"/>
</dbReference>
<dbReference type="InterPro" id="IPR015911">
    <property type="entry name" value="Phosphoglycerate_kinase_CS"/>
</dbReference>
<dbReference type="InterPro" id="IPR015824">
    <property type="entry name" value="Phosphoglycerate_kinase_N"/>
</dbReference>
<dbReference type="InterPro" id="IPR036043">
    <property type="entry name" value="Phosphoglycerate_kinase_sf"/>
</dbReference>
<dbReference type="PANTHER" id="PTHR11406">
    <property type="entry name" value="PHOSPHOGLYCERATE KINASE"/>
    <property type="match status" value="1"/>
</dbReference>
<dbReference type="PANTHER" id="PTHR11406:SF23">
    <property type="entry name" value="PHOSPHOGLYCERATE KINASE 1, CHLOROPLASTIC-RELATED"/>
    <property type="match status" value="1"/>
</dbReference>
<dbReference type="Pfam" id="PF00162">
    <property type="entry name" value="PGK"/>
    <property type="match status" value="1"/>
</dbReference>
<dbReference type="PIRSF" id="PIRSF000724">
    <property type="entry name" value="Pgk"/>
    <property type="match status" value="1"/>
</dbReference>
<dbReference type="PRINTS" id="PR00477">
    <property type="entry name" value="PHGLYCKINASE"/>
</dbReference>
<dbReference type="SUPFAM" id="SSF53748">
    <property type="entry name" value="Phosphoglycerate kinase"/>
    <property type="match status" value="1"/>
</dbReference>
<dbReference type="PROSITE" id="PS00111">
    <property type="entry name" value="PGLYCERATE_KINASE"/>
    <property type="match status" value="1"/>
</dbReference>
<accession>A1AFB0</accession>
<reference key="1">
    <citation type="journal article" date="2007" name="J. Bacteriol.">
        <title>The genome sequence of avian pathogenic Escherichia coli strain O1:K1:H7 shares strong similarities with human extraintestinal pathogenic E. coli genomes.</title>
        <authorList>
            <person name="Johnson T.J."/>
            <person name="Kariyawasam S."/>
            <person name="Wannemuehler Y."/>
            <person name="Mangiamele P."/>
            <person name="Johnson S.J."/>
            <person name="Doetkott C."/>
            <person name="Skyberg J.A."/>
            <person name="Lynne A.M."/>
            <person name="Johnson J.R."/>
            <person name="Nolan L.K."/>
        </authorList>
    </citation>
    <scope>NUCLEOTIDE SEQUENCE [LARGE SCALE GENOMIC DNA]</scope>
</reference>
<keyword id="KW-0007">Acetylation</keyword>
<keyword id="KW-0067">ATP-binding</keyword>
<keyword id="KW-0963">Cytoplasm</keyword>
<keyword id="KW-0324">Glycolysis</keyword>
<keyword id="KW-0418">Kinase</keyword>
<keyword id="KW-0547">Nucleotide-binding</keyword>
<keyword id="KW-1185">Reference proteome</keyword>
<keyword id="KW-0808">Transferase</keyword>
<sequence>MSVIKMTDLDLAGKRVFIRADLNVPVKDGKVTSDARIRASLPTIELALKQGAKVMVTSHLGRPTEGEYNEEFSLLPVVNYLKDKLSNPVRLVKDYLDGVDVAEGELVVLENVRFNKGEKKDDETLSKKYAALCDVFVMDAFGTAHRAQASTHGIGKFADVACAGPLLAAELDALGKALKEPARPMVAIVGGSKVSTKLTVLDSLSKIADQLIVGGGIANTFIAAQGHDVGKSLYEADLVDEAKRLLTTCNIPVPSDVRVATEFSETAPATLKSVNDVKADEQILDIGDASAQELAEILKNAKTILWNGPVGVFEFPNFRKGTEIVANAIADSEAFSIAGGGDTLAAIDLFGIADKISYISTGGGAFLEFVEGKVLPAVAMLEERAKK</sequence>
<proteinExistence type="inferred from homology"/>
<organism>
    <name type="scientific">Escherichia coli O1:K1 / APEC</name>
    <dbReference type="NCBI Taxonomy" id="405955"/>
    <lineage>
        <taxon>Bacteria</taxon>
        <taxon>Pseudomonadati</taxon>
        <taxon>Pseudomonadota</taxon>
        <taxon>Gammaproteobacteria</taxon>
        <taxon>Enterobacterales</taxon>
        <taxon>Enterobacteriaceae</taxon>
        <taxon>Escherichia</taxon>
    </lineage>
</organism>
<name>PGK_ECOK1</name>
<evidence type="ECO:0000255" key="1">
    <source>
        <dbReference type="HAMAP-Rule" id="MF_00145"/>
    </source>
</evidence>
<comment type="catalytic activity">
    <reaction evidence="1">
        <text>(2R)-3-phosphoglycerate + ATP = (2R)-3-phospho-glyceroyl phosphate + ADP</text>
        <dbReference type="Rhea" id="RHEA:14801"/>
        <dbReference type="ChEBI" id="CHEBI:30616"/>
        <dbReference type="ChEBI" id="CHEBI:57604"/>
        <dbReference type="ChEBI" id="CHEBI:58272"/>
        <dbReference type="ChEBI" id="CHEBI:456216"/>
        <dbReference type="EC" id="2.7.2.3"/>
    </reaction>
</comment>
<comment type="pathway">
    <text evidence="1">Carbohydrate degradation; glycolysis; pyruvate from D-glyceraldehyde 3-phosphate: step 2/5.</text>
</comment>
<comment type="subunit">
    <text evidence="1">Monomer.</text>
</comment>
<comment type="subcellular location">
    <subcellularLocation>
        <location evidence="1">Cytoplasm</location>
    </subcellularLocation>
</comment>
<comment type="similarity">
    <text evidence="1">Belongs to the phosphoglycerate kinase family.</text>
</comment>
<gene>
    <name evidence="1" type="primary">pgk</name>
    <name type="ordered locus">Ecok1_28560</name>
    <name type="ORF">APECO1_3607</name>
</gene>